<proteinExistence type="evidence at protein level"/>
<name>RXFP1_HUMAN</name>
<keyword id="KW-0002">3D-structure</keyword>
<keyword id="KW-0025">Alternative splicing</keyword>
<keyword id="KW-0106">Calcium</keyword>
<keyword id="KW-1003">Cell membrane</keyword>
<keyword id="KW-1015">Disulfide bond</keyword>
<keyword id="KW-0297">G-protein coupled receptor</keyword>
<keyword id="KW-0325">Glycoprotein</keyword>
<keyword id="KW-0433">Leucine-rich repeat</keyword>
<keyword id="KW-0472">Membrane</keyword>
<keyword id="KW-0479">Metal-binding</keyword>
<keyword id="KW-1267">Proteomics identification</keyword>
<keyword id="KW-0675">Receptor</keyword>
<keyword id="KW-1185">Reference proteome</keyword>
<keyword id="KW-0677">Repeat</keyword>
<keyword id="KW-0807">Transducer</keyword>
<keyword id="KW-0812">Transmembrane</keyword>
<keyword id="KW-1133">Transmembrane helix</keyword>
<protein>
    <recommendedName>
        <fullName>Relaxin receptor 1</fullName>
    </recommendedName>
    <alternativeName>
        <fullName>Leucine-rich repeat-containing G-protein coupled receptor 7</fullName>
    </alternativeName>
    <alternativeName>
        <fullName>Relaxin family peptide receptor 1</fullName>
    </alternativeName>
</protein>
<evidence type="ECO:0000255" key="1"/>
<evidence type="ECO:0000255" key="2">
    <source>
        <dbReference type="PROSITE-ProRule" id="PRU00124"/>
    </source>
</evidence>
<evidence type="ECO:0000255" key="3">
    <source>
        <dbReference type="PROSITE-ProRule" id="PRU00521"/>
    </source>
</evidence>
<evidence type="ECO:0000269" key="4">
    <source>
    </source>
</evidence>
<evidence type="ECO:0000269" key="5">
    <source>
    </source>
</evidence>
<evidence type="ECO:0000269" key="6">
    <source>
    </source>
</evidence>
<evidence type="ECO:0000269" key="7">
    <source>
    </source>
</evidence>
<evidence type="ECO:0000303" key="8">
    <source>
    </source>
</evidence>
<evidence type="ECO:0000303" key="9">
    <source>
    </source>
</evidence>
<evidence type="ECO:0000303" key="10">
    <source>
    </source>
</evidence>
<evidence type="ECO:0000305" key="11"/>
<evidence type="ECO:0007829" key="12">
    <source>
        <dbReference type="PDB" id="2JM4"/>
    </source>
</evidence>
<evidence type="ECO:0007829" key="13">
    <source>
        <dbReference type="PDB" id="7TMW"/>
    </source>
</evidence>
<gene>
    <name type="primary">RXFP1</name>
    <name type="synonym">LGR7</name>
</gene>
<feature type="chain" id="PRO_0000069700" description="Relaxin receptor 1">
    <location>
        <begin position="1"/>
        <end position="757"/>
    </location>
</feature>
<feature type="topological domain" description="Extracellular" evidence="1">
    <location>
        <begin position="1"/>
        <end position="409"/>
    </location>
</feature>
<feature type="transmembrane region" description="Helical; Name=1" evidence="1">
    <location>
        <begin position="410"/>
        <end position="430"/>
    </location>
</feature>
<feature type="topological domain" description="Cytoplasmic" evidence="1">
    <location>
        <begin position="431"/>
        <end position="443"/>
    </location>
</feature>
<feature type="transmembrane region" description="Helical; Name=2" evidence="1">
    <location>
        <begin position="444"/>
        <end position="464"/>
    </location>
</feature>
<feature type="topological domain" description="Extracellular" evidence="1">
    <location>
        <begin position="465"/>
        <end position="486"/>
    </location>
</feature>
<feature type="transmembrane region" description="Helical; Name=3" evidence="1">
    <location>
        <begin position="487"/>
        <end position="507"/>
    </location>
</feature>
<feature type="topological domain" description="Cytoplasmic" evidence="1">
    <location>
        <begin position="508"/>
        <end position="527"/>
    </location>
</feature>
<feature type="transmembrane region" description="Helical; Name=4" evidence="1">
    <location>
        <begin position="528"/>
        <end position="548"/>
    </location>
</feature>
<feature type="topological domain" description="Extracellular" evidence="1">
    <location>
        <begin position="549"/>
        <end position="577"/>
    </location>
</feature>
<feature type="transmembrane region" description="Helical; Name=5" evidence="1">
    <location>
        <begin position="578"/>
        <end position="598"/>
    </location>
</feature>
<feature type="topological domain" description="Cytoplasmic" evidence="1">
    <location>
        <begin position="599"/>
        <end position="629"/>
    </location>
</feature>
<feature type="transmembrane region" description="Helical; Name=6" evidence="1">
    <location>
        <begin position="630"/>
        <end position="650"/>
    </location>
</feature>
<feature type="topological domain" description="Extracellular" evidence="1">
    <location>
        <position position="651"/>
    </location>
</feature>
<feature type="transmembrane region" description="Helical; Name=7" evidence="1">
    <location>
        <begin position="652"/>
        <end position="672"/>
    </location>
</feature>
<feature type="topological domain" description="Cytoplasmic" evidence="1">
    <location>
        <begin position="673"/>
        <end position="757"/>
    </location>
</feature>
<feature type="domain" description="LDL-receptor class A" evidence="2">
    <location>
        <begin position="26"/>
        <end position="63"/>
    </location>
</feature>
<feature type="domain" description="LRRNT">
    <location>
        <begin position="91"/>
        <end position="127"/>
    </location>
</feature>
<feature type="repeat" description="LRR 1">
    <location>
        <begin position="151"/>
        <end position="172"/>
    </location>
</feature>
<feature type="repeat" description="LRR 2">
    <location>
        <begin position="175"/>
        <end position="196"/>
    </location>
</feature>
<feature type="repeat" description="LRR 3">
    <location>
        <begin position="199"/>
        <end position="220"/>
    </location>
</feature>
<feature type="repeat" description="LRR 4">
    <location>
        <begin position="223"/>
        <end position="244"/>
    </location>
</feature>
<feature type="repeat" description="LRR 5">
    <location>
        <begin position="248"/>
        <end position="269"/>
    </location>
</feature>
<feature type="repeat" description="LRR 6">
    <location>
        <begin position="272"/>
        <end position="293"/>
    </location>
</feature>
<feature type="repeat" description="LRR 7">
    <location>
        <begin position="296"/>
        <end position="317"/>
    </location>
</feature>
<feature type="repeat" description="LRR 8">
    <location>
        <begin position="320"/>
        <end position="341"/>
    </location>
</feature>
<feature type="repeat" description="LRR 9">
    <location>
        <begin position="344"/>
        <end position="365"/>
    </location>
</feature>
<feature type="binding site">
    <location>
        <position position="45"/>
    </location>
    <ligand>
        <name>Ca(2+)</name>
        <dbReference type="ChEBI" id="CHEBI:29108"/>
    </ligand>
</feature>
<feature type="binding site">
    <location>
        <position position="48"/>
    </location>
    <ligand>
        <name>Ca(2+)</name>
        <dbReference type="ChEBI" id="CHEBI:29108"/>
    </ligand>
</feature>
<feature type="binding site">
    <location>
        <position position="50"/>
    </location>
    <ligand>
        <name>Ca(2+)</name>
        <dbReference type="ChEBI" id="CHEBI:29108"/>
    </ligand>
</feature>
<feature type="binding site">
    <location>
        <position position="52"/>
    </location>
    <ligand>
        <name>Ca(2+)</name>
        <dbReference type="ChEBI" id="CHEBI:29108"/>
    </ligand>
</feature>
<feature type="binding site">
    <location>
        <position position="58"/>
    </location>
    <ligand>
        <name>Ca(2+)</name>
        <dbReference type="ChEBI" id="CHEBI:29108"/>
    </ligand>
</feature>
<feature type="binding site">
    <location>
        <position position="59"/>
    </location>
    <ligand>
        <name>Ca(2+)</name>
        <dbReference type="ChEBI" id="CHEBI:29108"/>
    </ligand>
</feature>
<feature type="glycosylation site" description="N-linked (GlcNAc...) asparagine" evidence="6">
    <location>
        <position position="36"/>
    </location>
</feature>
<feature type="glycosylation site" description="N-linked (GlcNAc...) asparagine" evidence="6">
    <location>
        <position position="127"/>
    </location>
</feature>
<feature type="glycosylation site" description="N-linked (GlcNAc...) asparagine" evidence="6">
    <location>
        <position position="264"/>
    </location>
</feature>
<feature type="glycosylation site" description="N-linked (GlcNAc...) asparagine" evidence="6">
    <location>
        <position position="272"/>
    </location>
</feature>
<feature type="glycosylation site" description="N-linked (GlcNAc...) asparagine" evidence="6">
    <location>
        <position position="325"/>
    </location>
</feature>
<feature type="glycosylation site" description="N-linked (GlcNAc...) asparagine" evidence="6">
    <location>
        <position position="368"/>
    </location>
</feature>
<feature type="disulfide bond">
    <location>
        <begin position="27"/>
        <end position="40"/>
    </location>
</feature>
<feature type="disulfide bond">
    <location>
        <begin position="34"/>
        <end position="53"/>
    </location>
</feature>
<feature type="disulfide bond">
    <location>
        <begin position="47"/>
        <end position="62"/>
    </location>
</feature>
<feature type="disulfide bond">
    <location>
        <begin position="485"/>
        <end position="563"/>
    </location>
</feature>
<feature type="splice variant" id="VSP_054375" description="In isoform 5." evidence="9">
    <location>
        <begin position="1"/>
        <end position="81"/>
    </location>
</feature>
<feature type="splice variant" id="VSP_001984" description="In isoform 2." evidence="8 9 10">
    <original>GDNNGWSLQFDKYFASYYKMTSQYPFEAETPECL</original>
    <variation>V</variation>
    <location>
        <begin position="63"/>
        <end position="96"/>
    </location>
</feature>
<feature type="splice variant" id="VSP_029877" description="In isoform 3." evidence="10">
    <original>YLSHNRITFL</original>
    <variation>SRAVKDGSEK</variation>
    <location>
        <begin position="180"/>
        <end position="189"/>
    </location>
</feature>
<feature type="splice variant" id="VSP_029878" description="In isoform 3." evidence="10">
    <location>
        <begin position="190"/>
        <end position="757"/>
    </location>
</feature>
<feature type="splice variant" id="VSP_054376" description="In isoform 5." evidence="9">
    <location>
        <begin position="252"/>
        <end position="275"/>
    </location>
</feature>
<feature type="splice variant" id="VSP_029879" description="In isoform 4." evidence="10">
    <original>LDLGSNKIENLPPLIFKDLKELSQLNLSYNPIQKIQANQFDYLVKLKSL</original>
    <variation>F</variation>
    <location>
        <begin position="300"/>
        <end position="348"/>
    </location>
</feature>
<feature type="mutagenesis site" description="Leads to constitutive increase of basal cAMP." evidence="4">
    <original>D</original>
    <variation>Y</variation>
    <location>
        <position position="637"/>
    </location>
</feature>
<feature type="sequence conflict" description="In Ref. 1; AAG17167." evidence="11" ref="1">
    <original>L</original>
    <variation>M</variation>
    <location>
        <position position="70"/>
    </location>
</feature>
<feature type="strand" evidence="12">
    <location>
        <begin position="31"/>
        <end position="33"/>
    </location>
</feature>
<feature type="strand" evidence="12">
    <location>
        <begin position="35"/>
        <end position="38"/>
    </location>
</feature>
<feature type="strand" evidence="12">
    <location>
        <begin position="40"/>
        <end position="42"/>
    </location>
</feature>
<feature type="helix" evidence="12">
    <location>
        <begin position="43"/>
        <end position="45"/>
    </location>
</feature>
<feature type="strand" evidence="12">
    <location>
        <begin position="53"/>
        <end position="55"/>
    </location>
</feature>
<feature type="helix" evidence="13">
    <location>
        <begin position="406"/>
        <end position="429"/>
    </location>
</feature>
<feature type="helix" evidence="13">
    <location>
        <begin position="438"/>
        <end position="467"/>
    </location>
</feature>
<feature type="strand" evidence="13">
    <location>
        <begin position="468"/>
        <end position="470"/>
    </location>
</feature>
<feature type="turn" evidence="13">
    <location>
        <begin position="472"/>
        <end position="475"/>
    </location>
</feature>
<feature type="helix" evidence="13">
    <location>
        <begin position="476"/>
        <end position="481"/>
    </location>
</feature>
<feature type="helix" evidence="13">
    <location>
        <begin position="483"/>
        <end position="514"/>
    </location>
</feature>
<feature type="helix" evidence="13">
    <location>
        <begin position="525"/>
        <end position="548"/>
    </location>
</feature>
<feature type="helix" evidence="13">
    <location>
        <begin position="550"/>
        <end position="553"/>
    </location>
</feature>
<feature type="helix" evidence="13">
    <location>
        <begin position="574"/>
        <end position="583"/>
    </location>
</feature>
<feature type="turn" evidence="13">
    <location>
        <begin position="584"/>
        <end position="587"/>
    </location>
</feature>
<feature type="helix" evidence="13">
    <location>
        <begin position="588"/>
        <end position="607"/>
    </location>
</feature>
<feature type="helix" evidence="13">
    <location>
        <begin position="625"/>
        <end position="652"/>
    </location>
</feature>
<feature type="helix" evidence="13">
    <location>
        <begin position="659"/>
        <end position="667"/>
    </location>
</feature>
<feature type="turn" evidence="13">
    <location>
        <begin position="668"/>
        <end position="671"/>
    </location>
</feature>
<feature type="helix" evidence="13">
    <location>
        <begin position="672"/>
        <end position="680"/>
    </location>
</feature>
<feature type="turn" evidence="13">
    <location>
        <begin position="681"/>
        <end position="683"/>
    </location>
</feature>
<feature type="helix" evidence="13">
    <location>
        <begin position="686"/>
        <end position="698"/>
    </location>
</feature>
<accession>Q9HBX9</accession>
<accession>B4DHD1</accession>
<accession>B4DTV2</accession>
<accession>Q2M215</accession>
<accession>Q3KU24</accession>
<accession>Q3KU25</accession>
<accession>Q3KU26</accession>
<reference key="1">
    <citation type="journal article" date="2000" name="Mol. Endocrinol.">
        <title>The three subfamilies of leucine-rich repeat-containing G protein-coupled receptors (LGR): identification of LGR6 and LGR7 and the signaling mechanism for LGR7.</title>
        <authorList>
            <person name="Hsu S.Y."/>
            <person name="Kudo M."/>
            <person name="Chen T."/>
            <person name="Nakabayashi K."/>
            <person name="Bhalla A."/>
            <person name="van der Spek P.J."/>
            <person name="van Duin M."/>
            <person name="Hsueh A.J.W."/>
        </authorList>
    </citation>
    <scope>NUCLEOTIDE SEQUENCE [MRNA] (ISOFORMS 1 AND 2)</scope>
    <scope>MUTAGENESIS OF ASP-637</scope>
</reference>
<reference key="2">
    <citation type="journal article" date="2005" name="Mol. Hum. Reprod.">
        <title>Splice variants of the relaxin and INSL3 receptors reveal unanticipated molecular complexity.</title>
        <authorList>
            <person name="Muda M."/>
            <person name="He C."/>
            <person name="Martini P.G.V."/>
            <person name="Ferraro T."/>
            <person name="Layfield S."/>
            <person name="Taylor D."/>
            <person name="Chevrier C."/>
            <person name="Schweickhardt R."/>
            <person name="Kelton C."/>
            <person name="Ryan P.L."/>
            <person name="Bathgate R.A.D."/>
        </authorList>
    </citation>
    <scope>NUCLEOTIDE SEQUENCE [MRNA] (ISOFORMS 2; 3 AND 4)</scope>
    <scope>SUBCELLULAR LOCATION</scope>
    <scope>TISSUE SPECIFICITY</scope>
</reference>
<reference key="3">
    <citation type="journal article" date="2004" name="Nat. Genet.">
        <title>Complete sequencing and characterization of 21,243 full-length human cDNAs.</title>
        <authorList>
            <person name="Ota T."/>
            <person name="Suzuki Y."/>
            <person name="Nishikawa T."/>
            <person name="Otsuki T."/>
            <person name="Sugiyama T."/>
            <person name="Irie R."/>
            <person name="Wakamatsu A."/>
            <person name="Hayashi K."/>
            <person name="Sato H."/>
            <person name="Nagai K."/>
            <person name="Kimura K."/>
            <person name="Makita H."/>
            <person name="Sekine M."/>
            <person name="Obayashi M."/>
            <person name="Nishi T."/>
            <person name="Shibahara T."/>
            <person name="Tanaka T."/>
            <person name="Ishii S."/>
            <person name="Yamamoto J."/>
            <person name="Saito K."/>
            <person name="Kawai Y."/>
            <person name="Isono Y."/>
            <person name="Nakamura Y."/>
            <person name="Nagahari K."/>
            <person name="Murakami K."/>
            <person name="Yasuda T."/>
            <person name="Iwayanagi T."/>
            <person name="Wagatsuma M."/>
            <person name="Shiratori A."/>
            <person name="Sudo H."/>
            <person name="Hosoiri T."/>
            <person name="Kaku Y."/>
            <person name="Kodaira H."/>
            <person name="Kondo H."/>
            <person name="Sugawara M."/>
            <person name="Takahashi M."/>
            <person name="Kanda K."/>
            <person name="Yokoi T."/>
            <person name="Furuya T."/>
            <person name="Kikkawa E."/>
            <person name="Omura Y."/>
            <person name="Abe K."/>
            <person name="Kamihara K."/>
            <person name="Katsuta N."/>
            <person name="Sato K."/>
            <person name="Tanikawa M."/>
            <person name="Yamazaki M."/>
            <person name="Ninomiya K."/>
            <person name="Ishibashi T."/>
            <person name="Yamashita H."/>
            <person name="Murakawa K."/>
            <person name="Fujimori K."/>
            <person name="Tanai H."/>
            <person name="Kimata M."/>
            <person name="Watanabe M."/>
            <person name="Hiraoka S."/>
            <person name="Chiba Y."/>
            <person name="Ishida S."/>
            <person name="Ono Y."/>
            <person name="Takiguchi S."/>
            <person name="Watanabe S."/>
            <person name="Yosida M."/>
            <person name="Hotuta T."/>
            <person name="Kusano J."/>
            <person name="Kanehori K."/>
            <person name="Takahashi-Fujii A."/>
            <person name="Hara H."/>
            <person name="Tanase T.-O."/>
            <person name="Nomura Y."/>
            <person name="Togiya S."/>
            <person name="Komai F."/>
            <person name="Hara R."/>
            <person name="Takeuchi K."/>
            <person name="Arita M."/>
            <person name="Imose N."/>
            <person name="Musashino K."/>
            <person name="Yuuki H."/>
            <person name="Oshima A."/>
            <person name="Sasaki N."/>
            <person name="Aotsuka S."/>
            <person name="Yoshikawa Y."/>
            <person name="Matsunawa H."/>
            <person name="Ichihara T."/>
            <person name="Shiohata N."/>
            <person name="Sano S."/>
            <person name="Moriya S."/>
            <person name="Momiyama H."/>
            <person name="Satoh N."/>
            <person name="Takami S."/>
            <person name="Terashima Y."/>
            <person name="Suzuki O."/>
            <person name="Nakagawa S."/>
            <person name="Senoh A."/>
            <person name="Mizoguchi H."/>
            <person name="Goto Y."/>
            <person name="Shimizu F."/>
            <person name="Wakebe H."/>
            <person name="Hishigaki H."/>
            <person name="Watanabe T."/>
            <person name="Sugiyama A."/>
            <person name="Takemoto M."/>
            <person name="Kawakami B."/>
            <person name="Yamazaki M."/>
            <person name="Watanabe K."/>
            <person name="Kumagai A."/>
            <person name="Itakura S."/>
            <person name="Fukuzumi Y."/>
            <person name="Fujimori Y."/>
            <person name="Komiyama M."/>
            <person name="Tashiro H."/>
            <person name="Tanigami A."/>
            <person name="Fujiwara T."/>
            <person name="Ono T."/>
            <person name="Yamada K."/>
            <person name="Fujii Y."/>
            <person name="Ozaki K."/>
            <person name="Hirao M."/>
            <person name="Ohmori Y."/>
            <person name="Kawabata A."/>
            <person name="Hikiji T."/>
            <person name="Kobatake N."/>
            <person name="Inagaki H."/>
            <person name="Ikema Y."/>
            <person name="Okamoto S."/>
            <person name="Okitani R."/>
            <person name="Kawakami T."/>
            <person name="Noguchi S."/>
            <person name="Itoh T."/>
            <person name="Shigeta K."/>
            <person name="Senba T."/>
            <person name="Matsumura K."/>
            <person name="Nakajima Y."/>
            <person name="Mizuno T."/>
            <person name="Morinaga M."/>
            <person name="Sasaki M."/>
            <person name="Togashi T."/>
            <person name="Oyama M."/>
            <person name="Hata H."/>
            <person name="Watanabe M."/>
            <person name="Komatsu T."/>
            <person name="Mizushima-Sugano J."/>
            <person name="Satoh T."/>
            <person name="Shirai Y."/>
            <person name="Takahashi Y."/>
            <person name="Nakagawa K."/>
            <person name="Okumura K."/>
            <person name="Nagase T."/>
            <person name="Nomura N."/>
            <person name="Kikuchi H."/>
            <person name="Masuho Y."/>
            <person name="Yamashita R."/>
            <person name="Nakai K."/>
            <person name="Yada T."/>
            <person name="Nakamura Y."/>
            <person name="Ohara O."/>
            <person name="Isogai T."/>
            <person name="Sugano S."/>
        </authorList>
    </citation>
    <scope>NUCLEOTIDE SEQUENCE [LARGE SCALE MRNA] (ISOFORMS 2 AND 5)</scope>
    <source>
        <tissue>Brain</tissue>
        <tissue>Placenta</tissue>
    </source>
</reference>
<reference key="4">
    <citation type="journal article" date="2005" name="Nature">
        <title>Generation and annotation of the DNA sequences of human chromosomes 2 and 4.</title>
        <authorList>
            <person name="Hillier L.W."/>
            <person name="Graves T.A."/>
            <person name="Fulton R.S."/>
            <person name="Fulton L.A."/>
            <person name="Pepin K.H."/>
            <person name="Minx P."/>
            <person name="Wagner-McPherson C."/>
            <person name="Layman D."/>
            <person name="Wylie K."/>
            <person name="Sekhon M."/>
            <person name="Becker M.C."/>
            <person name="Fewell G.A."/>
            <person name="Delehaunty K.D."/>
            <person name="Miner T.L."/>
            <person name="Nash W.E."/>
            <person name="Kremitzki C."/>
            <person name="Oddy L."/>
            <person name="Du H."/>
            <person name="Sun H."/>
            <person name="Bradshaw-Cordum H."/>
            <person name="Ali J."/>
            <person name="Carter J."/>
            <person name="Cordes M."/>
            <person name="Harris A."/>
            <person name="Isak A."/>
            <person name="van Brunt A."/>
            <person name="Nguyen C."/>
            <person name="Du F."/>
            <person name="Courtney L."/>
            <person name="Kalicki J."/>
            <person name="Ozersky P."/>
            <person name="Abbott S."/>
            <person name="Armstrong J."/>
            <person name="Belter E.A."/>
            <person name="Caruso L."/>
            <person name="Cedroni M."/>
            <person name="Cotton M."/>
            <person name="Davidson T."/>
            <person name="Desai A."/>
            <person name="Elliott G."/>
            <person name="Erb T."/>
            <person name="Fronick C."/>
            <person name="Gaige T."/>
            <person name="Haakenson W."/>
            <person name="Haglund K."/>
            <person name="Holmes A."/>
            <person name="Harkins R."/>
            <person name="Kim K."/>
            <person name="Kruchowski S.S."/>
            <person name="Strong C.M."/>
            <person name="Grewal N."/>
            <person name="Goyea E."/>
            <person name="Hou S."/>
            <person name="Levy A."/>
            <person name="Martinka S."/>
            <person name="Mead K."/>
            <person name="McLellan M.D."/>
            <person name="Meyer R."/>
            <person name="Randall-Maher J."/>
            <person name="Tomlinson C."/>
            <person name="Dauphin-Kohlberg S."/>
            <person name="Kozlowicz-Reilly A."/>
            <person name="Shah N."/>
            <person name="Swearengen-Shahid S."/>
            <person name="Snider J."/>
            <person name="Strong J.T."/>
            <person name="Thompson J."/>
            <person name="Yoakum M."/>
            <person name="Leonard S."/>
            <person name="Pearman C."/>
            <person name="Trani L."/>
            <person name="Radionenko M."/>
            <person name="Waligorski J.E."/>
            <person name="Wang C."/>
            <person name="Rock S.M."/>
            <person name="Tin-Wollam A.-M."/>
            <person name="Maupin R."/>
            <person name="Latreille P."/>
            <person name="Wendl M.C."/>
            <person name="Yang S.-P."/>
            <person name="Pohl C."/>
            <person name="Wallis J.W."/>
            <person name="Spieth J."/>
            <person name="Bieri T.A."/>
            <person name="Berkowicz N."/>
            <person name="Nelson J.O."/>
            <person name="Osborne J."/>
            <person name="Ding L."/>
            <person name="Meyer R."/>
            <person name="Sabo A."/>
            <person name="Shotland Y."/>
            <person name="Sinha P."/>
            <person name="Wohldmann P.E."/>
            <person name="Cook L.L."/>
            <person name="Hickenbotham M.T."/>
            <person name="Eldred J."/>
            <person name="Williams D."/>
            <person name="Jones T.A."/>
            <person name="She X."/>
            <person name="Ciccarelli F.D."/>
            <person name="Izaurralde E."/>
            <person name="Taylor J."/>
            <person name="Schmutz J."/>
            <person name="Myers R.M."/>
            <person name="Cox D.R."/>
            <person name="Huang X."/>
            <person name="McPherson J.D."/>
            <person name="Mardis E.R."/>
            <person name="Clifton S.W."/>
            <person name="Warren W.C."/>
            <person name="Chinwalla A.T."/>
            <person name="Eddy S.R."/>
            <person name="Marra M.A."/>
            <person name="Ovcharenko I."/>
            <person name="Furey T.S."/>
            <person name="Miller W."/>
            <person name="Eichler E.E."/>
            <person name="Bork P."/>
            <person name="Suyama M."/>
            <person name="Torrents D."/>
            <person name="Waterston R.H."/>
            <person name="Wilson R.K."/>
        </authorList>
    </citation>
    <scope>NUCLEOTIDE SEQUENCE [LARGE SCALE GENOMIC DNA]</scope>
</reference>
<reference key="5">
    <citation type="submission" date="2005-09" db="EMBL/GenBank/DDBJ databases">
        <authorList>
            <person name="Mural R.J."/>
            <person name="Istrail S."/>
            <person name="Sutton G.G."/>
            <person name="Florea L."/>
            <person name="Halpern A.L."/>
            <person name="Mobarry C.M."/>
            <person name="Lippert R."/>
            <person name="Walenz B."/>
            <person name="Shatkay H."/>
            <person name="Dew I."/>
            <person name="Miller J.R."/>
            <person name="Flanigan M.J."/>
            <person name="Edwards N.J."/>
            <person name="Bolanos R."/>
            <person name="Fasulo D."/>
            <person name="Halldorsson B.V."/>
            <person name="Hannenhalli S."/>
            <person name="Turner R."/>
            <person name="Yooseph S."/>
            <person name="Lu F."/>
            <person name="Nusskern D.R."/>
            <person name="Shue B.C."/>
            <person name="Zheng X.H."/>
            <person name="Zhong F."/>
            <person name="Delcher A.L."/>
            <person name="Huson D.H."/>
            <person name="Kravitz S.A."/>
            <person name="Mouchard L."/>
            <person name="Reinert K."/>
            <person name="Remington K.A."/>
            <person name="Clark A.G."/>
            <person name="Waterman M.S."/>
            <person name="Eichler E.E."/>
            <person name="Adams M.D."/>
            <person name="Hunkapiller M.W."/>
            <person name="Myers E.W."/>
            <person name="Venter J.C."/>
        </authorList>
    </citation>
    <scope>NUCLEOTIDE SEQUENCE [LARGE SCALE GENOMIC DNA]</scope>
</reference>
<reference key="6">
    <citation type="journal article" date="2004" name="Genome Res.">
        <title>The status, quality, and expansion of the NIH full-length cDNA project: the Mammalian Gene Collection (MGC).</title>
        <authorList>
            <consortium name="The MGC Project Team"/>
        </authorList>
    </citation>
    <scope>NUCLEOTIDE SEQUENCE [LARGE SCALE MRNA] (ISOFORM 1)</scope>
    <source>
        <tissue>Brain cortex</tissue>
    </source>
</reference>
<reference key="7">
    <citation type="journal article" date="2001" name="Mol. Hum. Reprod.">
        <title>Relaxin signalling links tyrosine phosphorylation to phosphodiesterase and adenylyl cyclase activity.</title>
        <authorList>
            <person name="Bartsch O."/>
            <person name="Bartlick B."/>
            <person name="Ivell R."/>
        </authorList>
    </citation>
    <scope>CHARACTERIZATION</scope>
</reference>
<reference key="8">
    <citation type="journal article" date="2003" name="J. Biol. Chem.">
        <title>H3 relaxin is a specific ligand for LGR7 and activates the receptor by interacting with both the ectodomain and the exoloop 2.</title>
        <authorList>
            <person name="Sudo S."/>
            <person name="Kumagai J."/>
            <person name="Nishi S."/>
            <person name="Layfield S."/>
            <person name="Ferraro T."/>
            <person name="Bathgate R.A.D."/>
            <person name="Hsueh A.J.W."/>
        </authorList>
    </citation>
    <scope>INTERACTION WITH RLN3</scope>
</reference>
<reference key="9">
    <citation type="journal article" date="2008" name="Biochemistry">
        <title>Identification of the N-linked glycosylation sites of the human relaxin receptor and effect of glycosylation on receptor function.</title>
        <authorList>
            <person name="Yan Y."/>
            <person name="Scott D.J."/>
            <person name="Wilkinson T.N."/>
            <person name="Ji J."/>
            <person name="Tregear G.W."/>
            <person name="Bathgate R.A."/>
        </authorList>
    </citation>
    <scope>GLYCOSYLATION AT ASN-36; ASN-127; ASN-264; ASN-272; ASN-325 AND ASN-368</scope>
</reference>
<reference key="10">
    <citation type="journal article" date="2013" name="J. Pathol.">
        <title>C1q-tumour necrosis factor-related protein 8 (CTRP8) is a novel interaction partner of relaxin receptor RXFP1 in human brain cancer cells.</title>
        <authorList>
            <person name="Glogowska A."/>
            <person name="Kunanuvat U."/>
            <person name="Stetefeld J."/>
            <person name="Patel T.R."/>
            <person name="Thanasupawat T."/>
            <person name="Krcek J."/>
            <person name="Weber E."/>
            <person name="Wong G.W."/>
            <person name="Del Bigio M.R."/>
            <person name="Hoang-Vu C."/>
            <person name="Hombach-Klonisch S."/>
            <person name="Klonisch T."/>
        </authorList>
    </citation>
    <scope>INTERACTION WITH C1QTNF8</scope>
</reference>
<reference key="11">
    <citation type="journal article" date="2007" name="J. Biol. Chem.">
        <title>The NMR solution structure of the relaxin (RXFP1) receptor lipoprotein receptor class A module and identification of key residues in the N-terminal region of the module that mediate receptor activation.</title>
        <authorList>
            <person name="Hopkins E.J."/>
            <person name="Layfield S."/>
            <person name="Ferraro T."/>
            <person name="Bathgate R.A.D."/>
            <person name="Gooley P.R."/>
        </authorList>
    </citation>
    <scope>STRUCTURE BY NMR OF 23-63 IN COMPLEX WITH CALCIUM IONS</scope>
</reference>
<sequence>MTSGSVFFYILIFGKYFSHGGGQDVKCSLGYFPCGNITKCLPQLLHCNGVDDCGNQADEDNCGDNNGWSLQFDKYFASYYKMTSQYPFEAETPECLVGSVPVQCLCQGLELDCDETNLRAVPSVSSNVTAMSLQWNLIRKLPPDCFKNYHDLQKLYLQNNKITSISIYAFRGLNSLTKLYLSHNRITFLKPGVFEDLHRLEWLIIEDNHLSRISPPTFYGLNSLILLVLMNNVLTRLPDKPLCQHMPRLHWLDLEGNHIHNLRNLTFISCSNLTVLVMRKNKINHLNENTFAPLQKLDELDLGSNKIENLPPLIFKDLKELSQLNLSYNPIQKIQANQFDYLVKLKSLSLEGIEISNIQQRMFRPLMNLSHIYFKKFQYCGYAPHVRSCKPNTDGISSLENLLASIIQRVFVWVVSAVTCFGNIFVICMRPYIRSENKLYAMSIISLCCADCLMGIYLFVIGGFDLKFRGEYNKHAQLWMESTHCQLVGSLAILSTEVSVLLLTFLTLEKYICIVYPFRCVRPGKCRTITVLILIWITGFIVAFIPLSNKEFFKNYYGTNGVCFPLHSEDTESIGAQIYSVAIFLGINLAAFIIIVFSYGSMFYSVHQSAITATEIRNQVKKEMILAKRFFFIVFTDALCWIPIFVVKFLSLLQVEIPGTITSWVVIFILPINSALNPILYTLTTRPFKEMIHRFWYNYRQRKSMDSKGQKTYAPSFIWVEMWPLQEMPPELMKPDLFTYPCEMSLISQSTRLNSYS</sequence>
<organism>
    <name type="scientific">Homo sapiens</name>
    <name type="common">Human</name>
    <dbReference type="NCBI Taxonomy" id="9606"/>
    <lineage>
        <taxon>Eukaryota</taxon>
        <taxon>Metazoa</taxon>
        <taxon>Chordata</taxon>
        <taxon>Craniata</taxon>
        <taxon>Vertebrata</taxon>
        <taxon>Euteleostomi</taxon>
        <taxon>Mammalia</taxon>
        <taxon>Eutheria</taxon>
        <taxon>Euarchontoglires</taxon>
        <taxon>Primates</taxon>
        <taxon>Haplorrhini</taxon>
        <taxon>Catarrhini</taxon>
        <taxon>Hominidae</taxon>
        <taxon>Homo</taxon>
    </lineage>
</organism>
<dbReference type="EMBL" id="AF190500">
    <property type="protein sequence ID" value="AAG17167.1"/>
    <property type="molecule type" value="mRNA"/>
</dbReference>
<dbReference type="EMBL" id="AY899848">
    <property type="protein sequence ID" value="AAX85196.1"/>
    <property type="molecule type" value="mRNA"/>
</dbReference>
<dbReference type="EMBL" id="AY899849">
    <property type="protein sequence ID" value="AAX85197.1"/>
    <property type="molecule type" value="mRNA"/>
</dbReference>
<dbReference type="EMBL" id="AY899850">
    <property type="protein sequence ID" value="AAX85198.1"/>
    <property type="molecule type" value="mRNA"/>
</dbReference>
<dbReference type="EMBL" id="AK295040">
    <property type="protein sequence ID" value="BAG58092.1"/>
    <property type="molecule type" value="mRNA"/>
</dbReference>
<dbReference type="EMBL" id="AK300379">
    <property type="protein sequence ID" value="BAG62114.1"/>
    <property type="molecule type" value="mRNA"/>
</dbReference>
<dbReference type="EMBL" id="AC019341">
    <property type="status" value="NOT_ANNOTATED_CDS"/>
    <property type="molecule type" value="Genomic_DNA"/>
</dbReference>
<dbReference type="EMBL" id="AC107056">
    <property type="status" value="NOT_ANNOTATED_CDS"/>
    <property type="molecule type" value="Genomic_DNA"/>
</dbReference>
<dbReference type="EMBL" id="AC107219">
    <property type="status" value="NOT_ANNOTATED_CDS"/>
    <property type="molecule type" value="Genomic_DNA"/>
</dbReference>
<dbReference type="EMBL" id="AC108017">
    <property type="status" value="NOT_ANNOTATED_CDS"/>
    <property type="molecule type" value="Genomic_DNA"/>
</dbReference>
<dbReference type="EMBL" id="AC121161">
    <property type="status" value="NOT_ANNOTATED_CDS"/>
    <property type="molecule type" value="Genomic_DNA"/>
</dbReference>
<dbReference type="EMBL" id="AC125489">
    <property type="status" value="NOT_ANNOTATED_CDS"/>
    <property type="molecule type" value="Genomic_DNA"/>
</dbReference>
<dbReference type="EMBL" id="CH471056">
    <property type="protein sequence ID" value="EAX04856.1"/>
    <property type="molecule type" value="Genomic_DNA"/>
</dbReference>
<dbReference type="EMBL" id="BC112142">
    <property type="protein sequence ID" value="AAI12143.1"/>
    <property type="molecule type" value="mRNA"/>
</dbReference>
<dbReference type="EMBL" id="BC113617">
    <property type="protein sequence ID" value="AAI13618.1"/>
    <property type="molecule type" value="mRNA"/>
</dbReference>
<dbReference type="CCDS" id="CCDS43276.1">
    <molecule id="Q9HBX9-1"/>
</dbReference>
<dbReference type="CCDS" id="CCDS58929.1">
    <molecule id="Q9HBX9-4"/>
</dbReference>
<dbReference type="CCDS" id="CCDS58930.1">
    <molecule id="Q9HBX9-2"/>
</dbReference>
<dbReference type="RefSeq" id="NP_001240657.1">
    <molecule id="Q9HBX9-2"/>
    <property type="nucleotide sequence ID" value="NM_001253728.2"/>
</dbReference>
<dbReference type="RefSeq" id="NP_001240658.1">
    <molecule id="Q9HBX9-4"/>
    <property type="nucleotide sequence ID" value="NM_001253729.2"/>
</dbReference>
<dbReference type="RefSeq" id="NP_067647.2">
    <molecule id="Q9HBX9-1"/>
    <property type="nucleotide sequence ID" value="NM_021634.4"/>
</dbReference>
<dbReference type="PDB" id="2JM4">
    <property type="method" value="NMR"/>
    <property type="chains" value="A=23-63"/>
</dbReference>
<dbReference type="PDB" id="2M7P">
    <property type="method" value="NMR"/>
    <property type="chains" value="A=28-39"/>
</dbReference>
<dbReference type="PDB" id="7TMW">
    <property type="method" value="EM"/>
    <property type="resolution" value="3.20 A"/>
    <property type="chains" value="R=23-737"/>
</dbReference>
<dbReference type="PDBsum" id="2JM4"/>
<dbReference type="PDBsum" id="2M7P"/>
<dbReference type="PDBsum" id="7TMW"/>
<dbReference type="SASBDB" id="Q9HBX9"/>
<dbReference type="SMR" id="Q9HBX9"/>
<dbReference type="BioGRID" id="121891">
    <property type="interactions" value="86"/>
</dbReference>
<dbReference type="CORUM" id="Q9HBX9"/>
<dbReference type="FunCoup" id="Q9HBX9">
    <property type="interactions" value="992"/>
</dbReference>
<dbReference type="IntAct" id="Q9HBX9">
    <property type="interactions" value="85"/>
</dbReference>
<dbReference type="MINT" id="Q9HBX9"/>
<dbReference type="STRING" id="9606.ENSP00000405841"/>
<dbReference type="BindingDB" id="Q9HBX9"/>
<dbReference type="ChEMBL" id="CHEMBL1293316"/>
<dbReference type="GuidetoPHARMACOLOGY" id="351"/>
<dbReference type="TCDB" id="9.A.14.1.19">
    <property type="family name" value="the g-protein-coupled receptor (gpcr) family"/>
</dbReference>
<dbReference type="GlyCosmos" id="Q9HBX9">
    <property type="glycosylation" value="6 sites, No reported glycans"/>
</dbReference>
<dbReference type="GlyGen" id="Q9HBX9">
    <property type="glycosylation" value="8 sites"/>
</dbReference>
<dbReference type="iPTMnet" id="Q9HBX9"/>
<dbReference type="PhosphoSitePlus" id="Q9HBX9"/>
<dbReference type="BioMuta" id="RXFP1"/>
<dbReference type="DMDM" id="166209887"/>
<dbReference type="MassIVE" id="Q9HBX9"/>
<dbReference type="PaxDb" id="9606-ENSP00000405841"/>
<dbReference type="PeptideAtlas" id="Q9HBX9"/>
<dbReference type="ABCD" id="Q9HBX9">
    <property type="antibodies" value="9 sequenced antibodies"/>
</dbReference>
<dbReference type="Antibodypedia" id="7543">
    <property type="antibodies" value="341 antibodies from 33 providers"/>
</dbReference>
<dbReference type="DNASU" id="59350"/>
<dbReference type="Ensembl" id="ENST00000307765.10">
    <molecule id="Q9HBX9-1"/>
    <property type="protein sequence ID" value="ENSP00000303248.5"/>
    <property type="gene ID" value="ENSG00000171509.16"/>
</dbReference>
<dbReference type="Ensembl" id="ENST00000343542.9">
    <molecule id="Q9HBX9-4"/>
    <property type="protein sequence ID" value="ENSP00000345889.5"/>
    <property type="gene ID" value="ENSG00000171509.16"/>
</dbReference>
<dbReference type="Ensembl" id="ENST00000470033.2">
    <molecule id="Q9HBX9-2"/>
    <property type="protein sequence ID" value="ENSP00000420712.1"/>
    <property type="gene ID" value="ENSG00000171509.16"/>
</dbReference>
<dbReference type="Ensembl" id="ENST00000471616.5">
    <molecule id="Q9HBX9-3"/>
    <property type="protein sequence ID" value="ENSP00000434475.1"/>
    <property type="gene ID" value="ENSG00000171509.16"/>
</dbReference>
<dbReference type="GeneID" id="59350"/>
<dbReference type="KEGG" id="hsa:59350"/>
<dbReference type="MANE-Select" id="ENST00000307765.10">
    <property type="protein sequence ID" value="ENSP00000303248.5"/>
    <property type="RefSeq nucleotide sequence ID" value="NM_021634.4"/>
    <property type="RefSeq protein sequence ID" value="NP_067647.2"/>
</dbReference>
<dbReference type="UCSC" id="uc003ipz.4">
    <molecule id="Q9HBX9-1"/>
    <property type="organism name" value="human"/>
</dbReference>
<dbReference type="AGR" id="HGNC:19718"/>
<dbReference type="CTD" id="59350"/>
<dbReference type="DisGeNET" id="59350"/>
<dbReference type="GeneCards" id="RXFP1"/>
<dbReference type="HGNC" id="HGNC:19718">
    <property type="gene designation" value="RXFP1"/>
</dbReference>
<dbReference type="HPA" id="ENSG00000171509">
    <property type="expression patterns" value="Tissue enhanced (brain, endometrium)"/>
</dbReference>
<dbReference type="MIM" id="606654">
    <property type="type" value="gene"/>
</dbReference>
<dbReference type="neXtProt" id="NX_Q9HBX9"/>
<dbReference type="OpenTargets" id="ENSG00000171509"/>
<dbReference type="PharmGKB" id="PA134868312"/>
<dbReference type="VEuPathDB" id="HostDB:ENSG00000171509"/>
<dbReference type="eggNOG" id="KOG0619">
    <property type="taxonomic scope" value="Eukaryota"/>
</dbReference>
<dbReference type="eggNOG" id="KOG2087">
    <property type="taxonomic scope" value="Eukaryota"/>
</dbReference>
<dbReference type="GeneTree" id="ENSGT00940000158241"/>
<dbReference type="HOGENOM" id="CLU_1431019_0_0_1"/>
<dbReference type="InParanoid" id="Q9HBX9"/>
<dbReference type="OrthoDB" id="6022531at2759"/>
<dbReference type="PAN-GO" id="Q9HBX9">
    <property type="GO annotations" value="5 GO annotations based on evolutionary models"/>
</dbReference>
<dbReference type="PhylomeDB" id="Q9HBX9"/>
<dbReference type="TreeFam" id="TF326185"/>
<dbReference type="PathwayCommons" id="Q9HBX9"/>
<dbReference type="Reactome" id="R-HSA-418555">
    <property type="pathway name" value="G alpha (s) signalling events"/>
</dbReference>
<dbReference type="Reactome" id="R-HSA-444821">
    <property type="pathway name" value="Relaxin receptors"/>
</dbReference>
<dbReference type="SignaLink" id="Q9HBX9"/>
<dbReference type="SIGNOR" id="Q9HBX9"/>
<dbReference type="BioGRID-ORCS" id="59350">
    <property type="hits" value="10 hits in 1138 CRISPR screens"/>
</dbReference>
<dbReference type="ChiTaRS" id="RXFP1">
    <property type="organism name" value="human"/>
</dbReference>
<dbReference type="EvolutionaryTrace" id="Q9HBX9"/>
<dbReference type="GeneWiki" id="Relaxin/insulin-like_family_peptide_receptor_1"/>
<dbReference type="GenomeRNAi" id="59350"/>
<dbReference type="Pharos" id="Q9HBX9">
    <property type="development level" value="Tchem"/>
</dbReference>
<dbReference type="PRO" id="PR:Q9HBX9"/>
<dbReference type="Proteomes" id="UP000005640">
    <property type="component" value="Chromosome 4"/>
</dbReference>
<dbReference type="RNAct" id="Q9HBX9">
    <property type="molecule type" value="protein"/>
</dbReference>
<dbReference type="Bgee" id="ENSG00000171509">
    <property type="expression patterns" value="Expressed in decidua and 108 other cell types or tissues"/>
</dbReference>
<dbReference type="ExpressionAtlas" id="Q9HBX9">
    <property type="expression patterns" value="baseline and differential"/>
</dbReference>
<dbReference type="GO" id="GO:0005886">
    <property type="term" value="C:plasma membrane"/>
    <property type="evidence" value="ECO:0000318"/>
    <property type="project" value="GO_Central"/>
</dbReference>
<dbReference type="GO" id="GO:0008528">
    <property type="term" value="F:G protein-coupled peptide receptor activity"/>
    <property type="evidence" value="ECO:0000318"/>
    <property type="project" value="GO_Central"/>
</dbReference>
<dbReference type="GO" id="GO:0004930">
    <property type="term" value="F:G protein-coupled receptor activity"/>
    <property type="evidence" value="ECO:0000314"/>
    <property type="project" value="MGI"/>
</dbReference>
<dbReference type="GO" id="GO:0042562">
    <property type="term" value="F:hormone binding"/>
    <property type="evidence" value="ECO:0007669"/>
    <property type="project" value="Ensembl"/>
</dbReference>
<dbReference type="GO" id="GO:0046872">
    <property type="term" value="F:metal ion binding"/>
    <property type="evidence" value="ECO:0007669"/>
    <property type="project" value="UniProtKB-KW"/>
</dbReference>
<dbReference type="GO" id="GO:0007189">
    <property type="term" value="P:adenylate cyclase-activating G protein-coupled receptor signaling pathway"/>
    <property type="evidence" value="ECO:0000318"/>
    <property type="project" value="GO_Central"/>
</dbReference>
<dbReference type="GO" id="GO:0030198">
    <property type="term" value="P:extracellular matrix organization"/>
    <property type="evidence" value="ECO:0007669"/>
    <property type="project" value="Ensembl"/>
</dbReference>
<dbReference type="GO" id="GO:0009755">
    <property type="term" value="P:hormone-mediated signaling pathway"/>
    <property type="evidence" value="ECO:0000318"/>
    <property type="project" value="GO_Central"/>
</dbReference>
<dbReference type="GO" id="GO:0060427">
    <property type="term" value="P:lung connective tissue development"/>
    <property type="evidence" value="ECO:0007669"/>
    <property type="project" value="Ensembl"/>
</dbReference>
<dbReference type="GO" id="GO:0036446">
    <property type="term" value="P:myofibroblast differentiation"/>
    <property type="evidence" value="ECO:0007669"/>
    <property type="project" value="Ensembl"/>
</dbReference>
<dbReference type="GO" id="GO:0060658">
    <property type="term" value="P:nipple morphogenesis"/>
    <property type="evidence" value="ECO:0007669"/>
    <property type="project" value="Ensembl"/>
</dbReference>
<dbReference type="GO" id="GO:0007567">
    <property type="term" value="P:parturition"/>
    <property type="evidence" value="ECO:0007669"/>
    <property type="project" value="Ensembl"/>
</dbReference>
<dbReference type="CDD" id="cd15965">
    <property type="entry name" value="7tmA_RXFP1_LGR7"/>
    <property type="match status" value="1"/>
</dbReference>
<dbReference type="CDD" id="cd00112">
    <property type="entry name" value="LDLa"/>
    <property type="match status" value="1"/>
</dbReference>
<dbReference type="FunFam" id="1.20.1070.10:FF:000023">
    <property type="entry name" value="Relaxin family peptide receptor 1"/>
    <property type="match status" value="1"/>
</dbReference>
<dbReference type="FunFam" id="3.80.10.10:FF:000162">
    <property type="entry name" value="Relaxin family peptide receptor 1"/>
    <property type="match status" value="1"/>
</dbReference>
<dbReference type="FunFam" id="3.80.10.10:FF:000203">
    <property type="entry name" value="Relaxin family peptide receptor 1"/>
    <property type="match status" value="1"/>
</dbReference>
<dbReference type="FunFam" id="4.10.400.10:FF:000014">
    <property type="entry name" value="Relaxin family peptide receptor 1"/>
    <property type="match status" value="1"/>
</dbReference>
<dbReference type="Gene3D" id="4.10.400.10">
    <property type="entry name" value="Low-density Lipoprotein Receptor"/>
    <property type="match status" value="1"/>
</dbReference>
<dbReference type="Gene3D" id="1.20.1070.10">
    <property type="entry name" value="Rhodopsin 7-helix transmembrane proteins"/>
    <property type="match status" value="1"/>
</dbReference>
<dbReference type="Gene3D" id="3.80.10.10">
    <property type="entry name" value="Ribonuclease Inhibitor"/>
    <property type="match status" value="2"/>
</dbReference>
<dbReference type="IDEAL" id="IID00681"/>
<dbReference type="InterPro" id="IPR000276">
    <property type="entry name" value="GPCR_Rhodpsn"/>
</dbReference>
<dbReference type="InterPro" id="IPR017452">
    <property type="entry name" value="GPCR_Rhodpsn_7TM"/>
</dbReference>
<dbReference type="InterPro" id="IPR036055">
    <property type="entry name" value="LDL_receptor-like_sf"/>
</dbReference>
<dbReference type="InterPro" id="IPR023415">
    <property type="entry name" value="LDLR_class-A_CS"/>
</dbReference>
<dbReference type="InterPro" id="IPR002172">
    <property type="entry name" value="LDrepeatLR_classA_rpt"/>
</dbReference>
<dbReference type="InterPro" id="IPR001611">
    <property type="entry name" value="Leu-rich_rpt"/>
</dbReference>
<dbReference type="InterPro" id="IPR003591">
    <property type="entry name" value="Leu-rich_rpt_typical-subtyp"/>
</dbReference>
<dbReference type="InterPro" id="IPR032675">
    <property type="entry name" value="LRR_dom_sf"/>
</dbReference>
<dbReference type="InterPro" id="IPR008112">
    <property type="entry name" value="Relaxin_rcpt"/>
</dbReference>
<dbReference type="PANTHER" id="PTHR24372">
    <property type="entry name" value="GLYCOPROTEIN HORMONE RECEPTOR"/>
    <property type="match status" value="1"/>
</dbReference>
<dbReference type="PANTHER" id="PTHR24372:SF68">
    <property type="entry name" value="RELAXIN RECEPTOR 1"/>
    <property type="match status" value="1"/>
</dbReference>
<dbReference type="Pfam" id="PF00001">
    <property type="entry name" value="7tm_1"/>
    <property type="match status" value="1"/>
</dbReference>
<dbReference type="Pfam" id="PF00057">
    <property type="entry name" value="Ldl_recept_a"/>
    <property type="match status" value="1"/>
</dbReference>
<dbReference type="Pfam" id="PF13855">
    <property type="entry name" value="LRR_8"/>
    <property type="match status" value="2"/>
</dbReference>
<dbReference type="PRINTS" id="PR00237">
    <property type="entry name" value="GPCRRHODOPSN"/>
</dbReference>
<dbReference type="PRINTS" id="PR01739">
    <property type="entry name" value="RELAXINR"/>
</dbReference>
<dbReference type="SMART" id="SM00192">
    <property type="entry name" value="LDLa"/>
    <property type="match status" value="1"/>
</dbReference>
<dbReference type="SMART" id="SM00365">
    <property type="entry name" value="LRR_SD22"/>
    <property type="match status" value="4"/>
</dbReference>
<dbReference type="SMART" id="SM00369">
    <property type="entry name" value="LRR_TYP"/>
    <property type="match status" value="9"/>
</dbReference>
<dbReference type="SUPFAM" id="SSF81321">
    <property type="entry name" value="Family A G protein-coupled receptor-like"/>
    <property type="match status" value="1"/>
</dbReference>
<dbReference type="SUPFAM" id="SSF52058">
    <property type="entry name" value="L domain-like"/>
    <property type="match status" value="1"/>
</dbReference>
<dbReference type="SUPFAM" id="SSF57424">
    <property type="entry name" value="LDL receptor-like module"/>
    <property type="match status" value="1"/>
</dbReference>
<dbReference type="PROSITE" id="PS50262">
    <property type="entry name" value="G_PROTEIN_RECEP_F1_2"/>
    <property type="match status" value="1"/>
</dbReference>
<dbReference type="PROSITE" id="PS01209">
    <property type="entry name" value="LDLRA_1"/>
    <property type="match status" value="1"/>
</dbReference>
<dbReference type="PROSITE" id="PS50068">
    <property type="entry name" value="LDLRA_2"/>
    <property type="match status" value="1"/>
</dbReference>
<dbReference type="PROSITE" id="PS51450">
    <property type="entry name" value="LRR"/>
    <property type="match status" value="10"/>
</dbReference>
<comment type="function">
    <text>Receptor for relaxins. The activity of this receptor is mediated by G proteins leading to stimulation of adenylate cyclase and an increase of cAMP. Binding of the ligand may also activate a tyrosine kinase pathway that inhibits the activity of a phosphodiesterase that degrades cAMP.</text>
</comment>
<comment type="subunit">
    <text evidence="7">Interacts with C1QTNF8.</text>
</comment>
<comment type="interaction">
    <interactant intactId="EBI-8088969">
        <id>Q9HBX9</id>
    </interactant>
    <interactant intactId="EBI-703640">
        <id>P24588</id>
        <label>AKAP5</label>
    </interactant>
    <organismsDiffer>false</organismsDiffer>
    <experiments>2</experiments>
</comment>
<comment type="subcellular location">
    <subcellularLocation>
        <location evidence="5">Cell membrane</location>
        <topology evidence="5">Multi-pass membrane protein</topology>
    </subcellularLocation>
</comment>
<comment type="alternative products">
    <event type="alternative splicing"/>
    <isoform>
        <id>Q9HBX9-1</id>
        <name>1</name>
        <sequence type="displayed"/>
    </isoform>
    <isoform>
        <id>Q9HBX9-2</id>
        <name>2</name>
        <name>LGR7.10</name>
        <sequence type="described" ref="VSP_001984"/>
    </isoform>
    <isoform>
        <id>Q9HBX9-3</id>
        <name>3</name>
        <name>LGR7.1</name>
        <sequence type="described" ref="VSP_029877 VSP_029878"/>
    </isoform>
    <isoform>
        <id>Q9HBX9-4</id>
        <name>4</name>
        <name>LGR7.2</name>
        <sequence type="described" ref="VSP_029879"/>
    </isoform>
    <isoform>
        <id>Q9HBX9-5</id>
        <name>5</name>
        <sequence type="described" ref="VSP_054375 VSP_054376"/>
    </isoform>
</comment>
<comment type="tissue specificity">
    <text evidence="5">Expressed in the brain, kidney, testis, placenta, uterus, ovary, adrenal, prostate, skin and heart. Not detected in spleen.</text>
</comment>
<comment type="similarity">
    <text evidence="3">Belongs to the G-protein coupled receptor 1 family.</text>
</comment>